<comment type="function">
    <text evidence="1">Core subunit of the mitochondrial membrane respiratory chain NADH dehydrogenase (Complex I) which catalyzes electron transfer from NADH through the respiratory chain, using ubiquinone as an electron acceptor. Essential for the catalytic activity and assembly of complex I.</text>
</comment>
<comment type="catalytic activity">
    <reaction evidence="1">
        <text>a ubiquinone + NADH + 5 H(+)(in) = a ubiquinol + NAD(+) + 4 H(+)(out)</text>
        <dbReference type="Rhea" id="RHEA:29091"/>
        <dbReference type="Rhea" id="RHEA-COMP:9565"/>
        <dbReference type="Rhea" id="RHEA-COMP:9566"/>
        <dbReference type="ChEBI" id="CHEBI:15378"/>
        <dbReference type="ChEBI" id="CHEBI:16389"/>
        <dbReference type="ChEBI" id="CHEBI:17976"/>
        <dbReference type="ChEBI" id="CHEBI:57540"/>
        <dbReference type="ChEBI" id="CHEBI:57945"/>
        <dbReference type="EC" id="7.1.1.2"/>
    </reaction>
</comment>
<comment type="subunit">
    <text evidence="1 2">Core subunit of respiratory chain NADH dehydrogenase (Complex I) which is composed of 45 different subunits. Interacts with TMEM242 (By similarity).</text>
</comment>
<comment type="subcellular location">
    <subcellularLocation>
        <location evidence="2">Mitochondrion inner membrane</location>
        <topology evidence="3">Multi-pass membrane protein</topology>
    </subcellularLocation>
</comment>
<comment type="similarity">
    <text evidence="4">Belongs to the complex I subunit 2 family.</text>
</comment>
<geneLocation type="mitochondrion"/>
<feature type="chain" id="PRO_0000253516" description="NADH-ubiquinone oxidoreductase chain 2">
    <location>
        <begin position="1"/>
        <end position="347"/>
    </location>
</feature>
<feature type="transmembrane region" description="Helical" evidence="3">
    <location>
        <begin position="3"/>
        <end position="23"/>
    </location>
</feature>
<feature type="transmembrane region" description="Helical" evidence="3">
    <location>
        <begin position="25"/>
        <end position="45"/>
    </location>
</feature>
<feature type="transmembrane region" description="Helical" evidence="3">
    <location>
        <begin position="67"/>
        <end position="87"/>
    </location>
</feature>
<feature type="transmembrane region" description="Helical" evidence="3">
    <location>
        <begin position="96"/>
        <end position="116"/>
    </location>
</feature>
<feature type="transmembrane region" description="Helical" evidence="3">
    <location>
        <begin position="122"/>
        <end position="142"/>
    </location>
</feature>
<feature type="transmembrane region" description="Helical" evidence="3">
    <location>
        <begin position="145"/>
        <end position="165"/>
    </location>
</feature>
<feature type="transmembrane region" description="Helical" evidence="3">
    <location>
        <begin position="178"/>
        <end position="198"/>
    </location>
</feature>
<feature type="transmembrane region" description="Helical" evidence="3">
    <location>
        <begin position="200"/>
        <end position="220"/>
    </location>
</feature>
<feature type="transmembrane region" description="Helical" evidence="3">
    <location>
        <begin position="239"/>
        <end position="259"/>
    </location>
</feature>
<feature type="transmembrane region" description="Helical" evidence="3">
    <location>
        <begin position="274"/>
        <end position="294"/>
    </location>
</feature>
<feature type="transmembrane region" description="Helical" evidence="3">
    <location>
        <begin position="325"/>
        <end position="345"/>
    </location>
</feature>
<accession>Q6EMT0</accession>
<protein>
    <recommendedName>
        <fullName evidence="1">NADH-ubiquinone oxidoreductase chain 2</fullName>
        <ecNumber evidence="1">7.1.1.2</ecNumber>
    </recommendedName>
    <alternativeName>
        <fullName>NADH dehydrogenase subunit 2</fullName>
    </alternativeName>
</protein>
<dbReference type="EC" id="7.1.1.2" evidence="1"/>
<dbReference type="EMBL" id="AF492350">
    <property type="protein sequence ID" value="AAQ06581.1"/>
    <property type="molecule type" value="Genomic_DNA"/>
</dbReference>
<dbReference type="EMBL" id="AY126697">
    <property type="protein sequence ID" value="AAM95731.1"/>
    <property type="molecule type" value="Genomic_DNA"/>
</dbReference>
<dbReference type="RefSeq" id="YP_052698.1">
    <property type="nucleotide sequence ID" value="NC_005971.1"/>
</dbReference>
<dbReference type="SMR" id="Q6EMT0"/>
<dbReference type="GeneID" id="2885976"/>
<dbReference type="KEGG" id="biu:2885976"/>
<dbReference type="CTD" id="4536"/>
<dbReference type="OrthoDB" id="17486at91561"/>
<dbReference type="Proteomes" id="UP000515132">
    <property type="component" value="Mitochondrion MT"/>
</dbReference>
<dbReference type="GO" id="GO:0005743">
    <property type="term" value="C:mitochondrial inner membrane"/>
    <property type="evidence" value="ECO:0000250"/>
    <property type="project" value="UniProtKB"/>
</dbReference>
<dbReference type="GO" id="GO:0008137">
    <property type="term" value="F:NADH dehydrogenase (ubiquinone) activity"/>
    <property type="evidence" value="ECO:0000250"/>
    <property type="project" value="UniProtKB"/>
</dbReference>
<dbReference type="GO" id="GO:0006120">
    <property type="term" value="P:mitochondrial electron transport, NADH to ubiquinone"/>
    <property type="evidence" value="ECO:0000250"/>
    <property type="project" value="UniProtKB"/>
</dbReference>
<dbReference type="GO" id="GO:0032981">
    <property type="term" value="P:mitochondrial respiratory chain complex I assembly"/>
    <property type="evidence" value="ECO:0000250"/>
    <property type="project" value="UniProtKB"/>
</dbReference>
<dbReference type="InterPro" id="IPR050175">
    <property type="entry name" value="Complex_I_Subunit_2"/>
</dbReference>
<dbReference type="InterPro" id="IPR010933">
    <property type="entry name" value="NADH_DH_su2_C"/>
</dbReference>
<dbReference type="InterPro" id="IPR003917">
    <property type="entry name" value="NADH_UbQ_OxRdtase_chain2"/>
</dbReference>
<dbReference type="InterPro" id="IPR001750">
    <property type="entry name" value="ND/Mrp_TM"/>
</dbReference>
<dbReference type="PANTHER" id="PTHR46552">
    <property type="entry name" value="NADH-UBIQUINONE OXIDOREDUCTASE CHAIN 2"/>
    <property type="match status" value="1"/>
</dbReference>
<dbReference type="PANTHER" id="PTHR46552:SF1">
    <property type="entry name" value="NADH-UBIQUINONE OXIDOREDUCTASE CHAIN 2"/>
    <property type="match status" value="1"/>
</dbReference>
<dbReference type="Pfam" id="PF06444">
    <property type="entry name" value="NADH_dehy_S2_C"/>
    <property type="match status" value="1"/>
</dbReference>
<dbReference type="Pfam" id="PF00361">
    <property type="entry name" value="Proton_antipo_M"/>
    <property type="match status" value="1"/>
</dbReference>
<dbReference type="PRINTS" id="PR01436">
    <property type="entry name" value="NADHDHGNASE2"/>
</dbReference>
<proteinExistence type="inferred from homology"/>
<organism>
    <name type="scientific">Bos indicus</name>
    <name type="common">Zebu</name>
    <dbReference type="NCBI Taxonomy" id="9915"/>
    <lineage>
        <taxon>Eukaryota</taxon>
        <taxon>Metazoa</taxon>
        <taxon>Chordata</taxon>
        <taxon>Craniata</taxon>
        <taxon>Vertebrata</taxon>
        <taxon>Euteleostomi</taxon>
        <taxon>Mammalia</taxon>
        <taxon>Eutheria</taxon>
        <taxon>Laurasiatheria</taxon>
        <taxon>Artiodactyla</taxon>
        <taxon>Ruminantia</taxon>
        <taxon>Pecora</taxon>
        <taxon>Bovidae</taxon>
        <taxon>Bovinae</taxon>
        <taxon>Bos</taxon>
    </lineage>
</organism>
<name>NU2M_BOSIN</name>
<keyword id="KW-0249">Electron transport</keyword>
<keyword id="KW-0472">Membrane</keyword>
<keyword id="KW-0496">Mitochondrion</keyword>
<keyword id="KW-0999">Mitochondrion inner membrane</keyword>
<keyword id="KW-0520">NAD</keyword>
<keyword id="KW-1185">Reference proteome</keyword>
<keyword id="KW-0679">Respiratory chain</keyword>
<keyword id="KW-1278">Translocase</keyword>
<keyword id="KW-0812">Transmembrane</keyword>
<keyword id="KW-1133">Transmembrane helix</keyword>
<keyword id="KW-0813">Transport</keyword>
<keyword id="KW-0830">Ubiquinone</keyword>
<sequence>MNPIIFIIILLTIMLGTIIVMISSHWLLVWIGFEMNMLAIIPIMMKNHNPRATEASTKYFLTQSTASMLLMMAVIINLMFSGQWTVMKLFNPMASMLMTMALAMKLGMAPFHFWVPEVTQGIPLSSGLILLTWQKLAPMSVLYQIFPSINLNLILTLSVLSILIGGWGGLNQTQLRKIMAYSSIAHMGWMTAVLPYNPTMTLLNLIIYIIMTSTMFTMFMANSTTTTLSLSHTWNKTPIMTVLILATLLSMGGLPPLSGFMPKWMIIQEMTKNNSIILPTFMAITALLNLYFYMRLTYSTTLTMFPSTNNMKMKWQFPLMKKMTFLPTMVVLSTMMLPLTPMLSVLE</sequence>
<gene>
    <name evidence="1" type="primary">MT-ND2</name>
    <name type="synonym">MTND2</name>
    <name type="synonym">NADH2</name>
    <name type="synonym">ND2</name>
</gene>
<reference key="1">
    <citation type="submission" date="2002-03" db="EMBL/GenBank/DDBJ databases">
        <title>Complete sequence of the Bos indicus mitochondrial genome.</title>
        <authorList>
            <person name="Hiendleder S."/>
            <person name="Lewalski H."/>
            <person name="Wolf E."/>
        </authorList>
    </citation>
    <scope>NUCLEOTIDE SEQUENCE [GENOMIC DNA]</scope>
    <source>
        <tissue>Liver</tissue>
    </source>
</reference>
<reference key="2">
    <citation type="submission" date="2002-06" db="EMBL/GenBank/DDBJ databases">
        <title>The complete mitochondrial genome nucleotide sequence of Bos indicus.</title>
        <authorList>
            <person name="Miretti M.M."/>
            <person name="Pereira H.A. Jr."/>
            <person name="Greggio C."/>
            <person name="Suzuki J. Jr."/>
            <person name="Ferro J.A."/>
            <person name="Ferro M.I."/>
            <person name="Meirelles F."/>
            <person name="Garcia J.M."/>
            <person name="Smith L.C."/>
        </authorList>
    </citation>
    <scope>NUCLEOTIDE SEQUENCE [GENOMIC DNA]</scope>
</reference>
<evidence type="ECO:0000250" key="1">
    <source>
        <dbReference type="UniProtKB" id="P03891"/>
    </source>
</evidence>
<evidence type="ECO:0000250" key="2">
    <source>
        <dbReference type="UniProtKB" id="P03892"/>
    </source>
</evidence>
<evidence type="ECO:0000255" key="3"/>
<evidence type="ECO:0000305" key="4"/>